<comment type="function">
    <text evidence="1">Responsible for synthesis of pseudouridine from uracil-55 in the psi GC loop of transfer RNAs.</text>
</comment>
<comment type="catalytic activity">
    <reaction evidence="1">
        <text>uridine(55) in tRNA = pseudouridine(55) in tRNA</text>
        <dbReference type="Rhea" id="RHEA:42532"/>
        <dbReference type="Rhea" id="RHEA-COMP:10101"/>
        <dbReference type="Rhea" id="RHEA-COMP:10102"/>
        <dbReference type="ChEBI" id="CHEBI:65314"/>
        <dbReference type="ChEBI" id="CHEBI:65315"/>
        <dbReference type="EC" id="5.4.99.25"/>
    </reaction>
</comment>
<comment type="similarity">
    <text evidence="1">Belongs to the pseudouridine synthase TruB family. Type 1 subfamily.</text>
</comment>
<proteinExistence type="inferred from homology"/>
<keyword id="KW-0413">Isomerase</keyword>
<keyword id="KW-1185">Reference proteome</keyword>
<keyword id="KW-0819">tRNA processing</keyword>
<protein>
    <recommendedName>
        <fullName evidence="1">tRNA pseudouridine synthase B</fullName>
        <ecNumber evidence="1">5.4.99.25</ecNumber>
    </recommendedName>
    <alternativeName>
        <fullName evidence="1">tRNA pseudouridine(55) synthase</fullName>
        <shortName evidence="1">Psi55 synthase</shortName>
    </alternativeName>
    <alternativeName>
        <fullName evidence="1">tRNA pseudouridylate synthase</fullName>
    </alternativeName>
    <alternativeName>
        <fullName evidence="1">tRNA-uridine isomerase</fullName>
    </alternativeName>
</protein>
<evidence type="ECO:0000255" key="1">
    <source>
        <dbReference type="HAMAP-Rule" id="MF_01080"/>
    </source>
</evidence>
<reference key="1">
    <citation type="journal article" date="2005" name="Nucleic Acids Res.">
        <title>Genome dynamics and diversity of Shigella species, the etiologic agents of bacillary dysentery.</title>
        <authorList>
            <person name="Yang F."/>
            <person name="Yang J."/>
            <person name="Zhang X."/>
            <person name="Chen L."/>
            <person name="Jiang Y."/>
            <person name="Yan Y."/>
            <person name="Tang X."/>
            <person name="Wang J."/>
            <person name="Xiong Z."/>
            <person name="Dong J."/>
            <person name="Xue Y."/>
            <person name="Zhu Y."/>
            <person name="Xu X."/>
            <person name="Sun L."/>
            <person name="Chen S."/>
            <person name="Nie H."/>
            <person name="Peng J."/>
            <person name="Xu J."/>
            <person name="Wang Y."/>
            <person name="Yuan Z."/>
            <person name="Wen Y."/>
            <person name="Yao Z."/>
            <person name="Shen Y."/>
            <person name="Qiang B."/>
            <person name="Hou Y."/>
            <person name="Yu J."/>
            <person name="Jin Q."/>
        </authorList>
    </citation>
    <scope>NUCLEOTIDE SEQUENCE [LARGE SCALE GENOMIC DNA]</scope>
    <source>
        <strain>Ss046</strain>
    </source>
</reference>
<name>TRUB_SHISS</name>
<sequence>MSRPRRRGRDINGVLLLDKPQGMSSNDALQKVKRIYNANRAGHTGALDPLATGMLPICLGEATKFSQYLLDSDKRYRVIARLGQRTDTSDADGQIVEERPVTFSAEQLAAALDTFRGDIEQIPSMYSALKYQGKKLYEYARQGIEVPREARPITVYELLFIRHEGNELELEIHCSKGTYIRTIIDDLGEKLGCGAHVIYLRRLAVSKYPVERMVTLEHLRELVEQAEQQDIPAAELLDPLLMPMDSPASDYPVVNLPLTSSVYFKNGNPVRTSGAPLEGLVRVTEGENGKFIGMGEIDDEGRVAPRRLVVEYPA</sequence>
<accession>Q3YX75</accession>
<gene>
    <name evidence="1" type="primary">truB</name>
    <name type="ordered locus">SSON_3312</name>
</gene>
<organism>
    <name type="scientific">Shigella sonnei (strain Ss046)</name>
    <dbReference type="NCBI Taxonomy" id="300269"/>
    <lineage>
        <taxon>Bacteria</taxon>
        <taxon>Pseudomonadati</taxon>
        <taxon>Pseudomonadota</taxon>
        <taxon>Gammaproteobacteria</taxon>
        <taxon>Enterobacterales</taxon>
        <taxon>Enterobacteriaceae</taxon>
        <taxon>Shigella</taxon>
    </lineage>
</organism>
<dbReference type="EC" id="5.4.99.25" evidence="1"/>
<dbReference type="EMBL" id="CP000038">
    <property type="protein sequence ID" value="AAZ89887.1"/>
    <property type="molecule type" value="Genomic_DNA"/>
</dbReference>
<dbReference type="RefSeq" id="WP_000089698.1">
    <property type="nucleotide sequence ID" value="NC_007384.1"/>
</dbReference>
<dbReference type="SMR" id="Q3YX75"/>
<dbReference type="GeneID" id="93778817"/>
<dbReference type="KEGG" id="ssn:SSON_3312"/>
<dbReference type="HOGENOM" id="CLU_032087_0_3_6"/>
<dbReference type="Proteomes" id="UP000002529">
    <property type="component" value="Chromosome"/>
</dbReference>
<dbReference type="GO" id="GO:0003723">
    <property type="term" value="F:RNA binding"/>
    <property type="evidence" value="ECO:0007669"/>
    <property type="project" value="InterPro"/>
</dbReference>
<dbReference type="GO" id="GO:0160148">
    <property type="term" value="F:tRNA pseudouridine(55) synthase activity"/>
    <property type="evidence" value="ECO:0007669"/>
    <property type="project" value="UniProtKB-EC"/>
</dbReference>
<dbReference type="GO" id="GO:1990481">
    <property type="term" value="P:mRNA pseudouridine synthesis"/>
    <property type="evidence" value="ECO:0007669"/>
    <property type="project" value="TreeGrafter"/>
</dbReference>
<dbReference type="GO" id="GO:0031119">
    <property type="term" value="P:tRNA pseudouridine synthesis"/>
    <property type="evidence" value="ECO:0007669"/>
    <property type="project" value="UniProtKB-UniRule"/>
</dbReference>
<dbReference type="CDD" id="cd02573">
    <property type="entry name" value="PseudoU_synth_EcTruB"/>
    <property type="match status" value="1"/>
</dbReference>
<dbReference type="CDD" id="cd21152">
    <property type="entry name" value="PUA_TruB_bacterial"/>
    <property type="match status" value="1"/>
</dbReference>
<dbReference type="FunFam" id="2.30.130.10:FF:000004">
    <property type="entry name" value="tRNA pseudouridine synthase B"/>
    <property type="match status" value="1"/>
</dbReference>
<dbReference type="FunFam" id="3.30.2350.10:FF:000003">
    <property type="entry name" value="tRNA pseudouridine synthase B"/>
    <property type="match status" value="1"/>
</dbReference>
<dbReference type="Gene3D" id="3.30.2350.10">
    <property type="entry name" value="Pseudouridine synthase"/>
    <property type="match status" value="1"/>
</dbReference>
<dbReference type="Gene3D" id="2.30.130.10">
    <property type="entry name" value="PUA domain"/>
    <property type="match status" value="1"/>
</dbReference>
<dbReference type="HAMAP" id="MF_01080">
    <property type="entry name" value="TruB_bact"/>
    <property type="match status" value="1"/>
</dbReference>
<dbReference type="InterPro" id="IPR020103">
    <property type="entry name" value="PsdUridine_synth_cat_dom_sf"/>
</dbReference>
<dbReference type="InterPro" id="IPR002501">
    <property type="entry name" value="PsdUridine_synth_N"/>
</dbReference>
<dbReference type="InterPro" id="IPR015947">
    <property type="entry name" value="PUA-like_sf"/>
</dbReference>
<dbReference type="InterPro" id="IPR036974">
    <property type="entry name" value="PUA_sf"/>
</dbReference>
<dbReference type="InterPro" id="IPR014780">
    <property type="entry name" value="tRNA_psdUridine_synth_TruB"/>
</dbReference>
<dbReference type="InterPro" id="IPR015240">
    <property type="entry name" value="tRNA_sdUridine_synth_fam1_C"/>
</dbReference>
<dbReference type="InterPro" id="IPR032819">
    <property type="entry name" value="TruB_C"/>
</dbReference>
<dbReference type="NCBIfam" id="TIGR00431">
    <property type="entry name" value="TruB"/>
    <property type="match status" value="1"/>
</dbReference>
<dbReference type="PANTHER" id="PTHR13767:SF2">
    <property type="entry name" value="PSEUDOURIDYLATE SYNTHASE TRUB1"/>
    <property type="match status" value="1"/>
</dbReference>
<dbReference type="PANTHER" id="PTHR13767">
    <property type="entry name" value="TRNA-PSEUDOURIDINE SYNTHASE"/>
    <property type="match status" value="1"/>
</dbReference>
<dbReference type="Pfam" id="PF09157">
    <property type="entry name" value="TruB-C_2"/>
    <property type="match status" value="1"/>
</dbReference>
<dbReference type="Pfam" id="PF16198">
    <property type="entry name" value="TruB_C_2"/>
    <property type="match status" value="1"/>
</dbReference>
<dbReference type="Pfam" id="PF01509">
    <property type="entry name" value="TruB_N"/>
    <property type="match status" value="1"/>
</dbReference>
<dbReference type="SUPFAM" id="SSF55120">
    <property type="entry name" value="Pseudouridine synthase"/>
    <property type="match status" value="1"/>
</dbReference>
<dbReference type="SUPFAM" id="SSF88697">
    <property type="entry name" value="PUA domain-like"/>
    <property type="match status" value="1"/>
</dbReference>
<feature type="chain" id="PRO_0000229383" description="tRNA pseudouridine synthase B">
    <location>
        <begin position="1"/>
        <end position="314"/>
    </location>
</feature>
<feature type="active site" description="Nucleophile" evidence="1">
    <location>
        <position position="48"/>
    </location>
</feature>
<feature type="binding site" evidence="1">
    <location>
        <position position="43"/>
    </location>
    <ligand>
        <name>substrate</name>
    </ligand>
</feature>
<feature type="binding site" evidence="1">
    <location>
        <position position="76"/>
    </location>
    <ligand>
        <name>substrate</name>
    </ligand>
</feature>
<feature type="binding site" evidence="1">
    <location>
        <position position="179"/>
    </location>
    <ligand>
        <name>substrate</name>
    </ligand>
</feature>
<feature type="binding site" evidence="1">
    <location>
        <position position="200"/>
    </location>
    <ligand>
        <name>substrate</name>
    </ligand>
</feature>